<name>MCRG_METBF</name>
<accession>P07964</accession>
<accession>Q46E24</accession>
<proteinExistence type="evidence at protein level"/>
<evidence type="ECO:0000250" key="1">
    <source>
        <dbReference type="UniProtKB" id="P11562"/>
    </source>
</evidence>
<evidence type="ECO:0000269" key="2">
    <source>
    </source>
</evidence>
<evidence type="ECO:0000305" key="3"/>
<evidence type="ECO:0000305" key="4">
    <source>
    </source>
</evidence>
<evidence type="ECO:0007744" key="5">
    <source>
        <dbReference type="PDB" id="1E6Y"/>
    </source>
</evidence>
<evidence type="ECO:0007829" key="6">
    <source>
        <dbReference type="PDB" id="1E6Y"/>
    </source>
</evidence>
<feature type="initiator methionine" description="Removed">
    <location>
        <position position="1"/>
    </location>
</feature>
<feature type="chain" id="PRO_0000147473" description="Methyl-coenzyme M reductase subunit gamma">
    <location>
        <begin position="2"/>
        <end position="248"/>
    </location>
</feature>
<feature type="binding site" evidence="2 5">
    <location>
        <position position="121"/>
    </location>
    <ligand>
        <name>coenzyme M</name>
        <dbReference type="ChEBI" id="CHEBI:58319"/>
    </ligand>
</feature>
<feature type="helix" evidence="6">
    <location>
        <begin position="13"/>
        <end position="23"/>
    </location>
</feature>
<feature type="helix" evidence="6">
    <location>
        <begin position="34"/>
        <end position="41"/>
    </location>
</feature>
<feature type="strand" evidence="6">
    <location>
        <begin position="52"/>
        <end position="54"/>
    </location>
</feature>
<feature type="helix" evidence="6">
    <location>
        <begin position="57"/>
        <end position="60"/>
    </location>
</feature>
<feature type="helix" evidence="6">
    <location>
        <begin position="66"/>
        <end position="70"/>
    </location>
</feature>
<feature type="helix" evidence="6">
    <location>
        <begin position="75"/>
        <end position="79"/>
    </location>
</feature>
<feature type="strand" evidence="6">
    <location>
        <begin position="83"/>
        <end position="90"/>
    </location>
</feature>
<feature type="turn" evidence="6">
    <location>
        <begin position="92"/>
        <end position="94"/>
    </location>
</feature>
<feature type="helix" evidence="6">
    <location>
        <begin position="99"/>
        <end position="109"/>
    </location>
</feature>
<feature type="strand" evidence="6">
    <location>
        <begin position="110"/>
        <end position="112"/>
    </location>
</feature>
<feature type="strand" evidence="6">
    <location>
        <begin position="114"/>
        <end position="117"/>
    </location>
</feature>
<feature type="strand" evidence="6">
    <location>
        <begin position="122"/>
        <end position="127"/>
    </location>
</feature>
<feature type="helix" evidence="6">
    <location>
        <begin position="128"/>
        <end position="140"/>
    </location>
</feature>
<feature type="turn" evidence="6">
    <location>
        <begin position="146"/>
        <end position="148"/>
    </location>
</feature>
<feature type="strand" evidence="6">
    <location>
        <begin position="149"/>
        <end position="151"/>
    </location>
</feature>
<feature type="strand" evidence="6">
    <location>
        <begin position="176"/>
        <end position="179"/>
    </location>
</feature>
<feature type="strand" evidence="6">
    <location>
        <begin position="182"/>
        <end position="187"/>
    </location>
</feature>
<feature type="strand" evidence="6">
    <location>
        <begin position="193"/>
        <end position="199"/>
    </location>
</feature>
<feature type="helix" evidence="6">
    <location>
        <begin position="206"/>
        <end position="212"/>
    </location>
</feature>
<feature type="helix" evidence="6">
    <location>
        <begin position="223"/>
        <end position="225"/>
    </location>
</feature>
<feature type="helix" evidence="6">
    <location>
        <begin position="227"/>
        <end position="245"/>
    </location>
</feature>
<keyword id="KW-0002">3D-structure</keyword>
<keyword id="KW-0963">Cytoplasm</keyword>
<keyword id="KW-0903">Direct protein sequencing</keyword>
<keyword id="KW-0484">Methanogenesis</keyword>
<keyword id="KW-0808">Transferase</keyword>
<comment type="function">
    <text evidence="4">Component of the methyl-coenzyme M reductase (MCR) I that catalyzes the reductive cleavage of methyl-coenzyme M (CoM-S-CH3 or 2-(methylthio)ethanesulfonate) using coenzyme B (CoB or 7-mercaptoheptanoylthreonine phosphate) as reductant which results in the production of methane and the mixed heterodisulfide of CoB and CoM (CoM-S-S-CoB). This is the final step in methanogenesis.</text>
</comment>
<comment type="catalytic activity">
    <reaction evidence="1">
        <text>coenzyme B + methyl-coenzyme M = methane + coenzyme M-coenzyme B heterodisulfide</text>
        <dbReference type="Rhea" id="RHEA:12532"/>
        <dbReference type="ChEBI" id="CHEBI:16183"/>
        <dbReference type="ChEBI" id="CHEBI:58286"/>
        <dbReference type="ChEBI" id="CHEBI:58411"/>
        <dbReference type="ChEBI" id="CHEBI:58596"/>
        <dbReference type="EC" id="2.8.4.1"/>
    </reaction>
    <physiologicalReaction direction="left-to-right" evidence="1">
        <dbReference type="Rhea" id="RHEA:12533"/>
    </physiologicalReaction>
</comment>
<comment type="cofactor">
    <cofactor evidence="2">
        <name>coenzyme F430</name>
        <dbReference type="ChEBI" id="CHEBI:60540"/>
    </cofactor>
    <text evidence="1 2">Binds 2 coenzyme F430 non-covalently per MCR complex. Coenzyme F430 is a yellow nickel porphinoid (PubMed:11023796). Methyl-coenzyme-M reductase is activated when the enzyme-bound coenzyme F430 is reduced to the Ni(I) oxidation state (By similarity).</text>
</comment>
<comment type="pathway">
    <text evidence="1">One-carbon metabolism; methyl-coenzyme M reduction; methane from methyl-coenzyme M: step 1/1.</text>
</comment>
<comment type="subunit">
    <text evidence="2">MCR is a hexamer of two alpha, two beta, and two gamma chains, forming a dimer of heterotrimers.</text>
</comment>
<comment type="subcellular location">
    <subcellularLocation>
        <location evidence="1">Cytoplasm</location>
    </subcellularLocation>
</comment>
<comment type="similarity">
    <text evidence="3">Belongs to the methyl-coenzyme M reductase gamma subunit family.</text>
</comment>
<dbReference type="EC" id="2.8.4.1" evidence="1"/>
<dbReference type="EMBL" id="Y00158">
    <property type="protein sequence ID" value="CAA68356.1"/>
    <property type="molecule type" value="Genomic_DNA"/>
</dbReference>
<dbReference type="EMBL" id="CP000099">
    <property type="protein sequence ID" value="AAZ69868.1"/>
    <property type="molecule type" value="Genomic_DNA"/>
</dbReference>
<dbReference type="PIR" id="D29525">
    <property type="entry name" value="D29525"/>
</dbReference>
<dbReference type="PDB" id="1E6Y">
    <property type="method" value="X-ray"/>
    <property type="resolution" value="1.60 A"/>
    <property type="chains" value="C/F=2-248"/>
</dbReference>
<dbReference type="PDBsum" id="1E6Y"/>
<dbReference type="SMR" id="P07964"/>
<dbReference type="STRING" id="269797.Mbar_A0894"/>
<dbReference type="PaxDb" id="269797-Mbar_A0894"/>
<dbReference type="GeneID" id="24821496"/>
<dbReference type="KEGG" id="mba:Mbar_A0894"/>
<dbReference type="eggNOG" id="arCOG04858">
    <property type="taxonomic scope" value="Archaea"/>
</dbReference>
<dbReference type="HOGENOM" id="CLU_1092436_0_0_2"/>
<dbReference type="OrthoDB" id="52520at2157"/>
<dbReference type="BRENDA" id="2.8.4.1">
    <property type="organism ID" value="3250"/>
</dbReference>
<dbReference type="UniPathway" id="UPA00646">
    <property type="reaction ID" value="UER00699"/>
</dbReference>
<dbReference type="EvolutionaryTrace" id="P07964"/>
<dbReference type="GO" id="GO:0005737">
    <property type="term" value="C:cytoplasm"/>
    <property type="evidence" value="ECO:0007669"/>
    <property type="project" value="UniProtKB-SubCell"/>
</dbReference>
<dbReference type="GO" id="GO:0050524">
    <property type="term" value="F:coenzyme-B sulfoethylthiotransferase activity"/>
    <property type="evidence" value="ECO:0007669"/>
    <property type="project" value="UniProtKB-EC"/>
</dbReference>
<dbReference type="GO" id="GO:0015948">
    <property type="term" value="P:methanogenesis"/>
    <property type="evidence" value="ECO:0007669"/>
    <property type="project" value="UniProtKB-KW"/>
</dbReference>
<dbReference type="CDD" id="cd00539">
    <property type="entry name" value="MCR_gamma"/>
    <property type="match status" value="1"/>
</dbReference>
<dbReference type="Gene3D" id="3.90.320.20">
    <property type="entry name" value="Methyl-coenzyme M reductase, gamma subunit"/>
    <property type="match status" value="1"/>
</dbReference>
<dbReference type="InterPro" id="IPR009024">
    <property type="entry name" value="Me_CoM_Rdtase_Fd-like_fold"/>
</dbReference>
<dbReference type="InterPro" id="IPR003178">
    <property type="entry name" value="Me_CoM_Rdtase_gsu"/>
</dbReference>
<dbReference type="InterPro" id="IPR036994">
    <property type="entry name" value="Me_CoM_Rdtase_gsu_sf"/>
</dbReference>
<dbReference type="NCBIfam" id="TIGR03259">
    <property type="entry name" value="met_CoM_red_gam"/>
    <property type="match status" value="1"/>
</dbReference>
<dbReference type="Pfam" id="PF02240">
    <property type="entry name" value="MCR_gamma"/>
    <property type="match status" value="1"/>
</dbReference>
<dbReference type="PIRSF" id="PIRSF000264">
    <property type="entry name" value="Meth_CoM_rd_gama"/>
    <property type="match status" value="1"/>
</dbReference>
<dbReference type="SUPFAM" id="SSF55088">
    <property type="entry name" value="Methyl-coenzyme M reductase subunits"/>
    <property type="match status" value="1"/>
</dbReference>
<organism>
    <name type="scientific">Methanosarcina barkeri (strain Fusaro / DSM 804)</name>
    <dbReference type="NCBI Taxonomy" id="269797"/>
    <lineage>
        <taxon>Archaea</taxon>
        <taxon>Methanobacteriati</taxon>
        <taxon>Methanobacteriota</taxon>
        <taxon>Stenosarchaea group</taxon>
        <taxon>Methanomicrobia</taxon>
        <taxon>Methanosarcinales</taxon>
        <taxon>Methanosarcinaceae</taxon>
        <taxon>Methanosarcina</taxon>
    </lineage>
</organism>
<protein>
    <recommendedName>
        <fullName>Methyl-coenzyme M reductase subunit gamma</fullName>
        <ecNumber evidence="1">2.8.4.1</ecNumber>
    </recommendedName>
    <alternativeName>
        <fullName>Coenzyme-B sulfoethylthiotransferase gamma</fullName>
    </alternativeName>
</protein>
<sequence>MAYERQYYPGATSVAANRRKHMSGKLEKLREISDEDLTAVLGHRAPGSDYPSTHPPLAEMGEPACSTRENVAATPGAAAGDRVRYIQFADSMYNAPATPYFRSYFAAINFRGVDPGTLSGRQIVEARERDMEQCAKVQMETEITDHALAGVRGATVHGHSVRLQEDGVMFDMLDRRRLENGTIIMDKDQVAIPLDRKVDLGKPMSSEEAAKRTTIYRVDNVAFRDDAEVVEWVHRIFDQRTKFGFQPK</sequence>
<reference key="1">
    <citation type="journal article" date="1987" name="Nucleic Acids Res.">
        <title>Nucleotide sequence of the methyl coenzyme M reductase gene cluster from Methanosarcina barkeri.</title>
        <authorList>
            <person name="Bokranz M."/>
            <person name="Klein A."/>
        </authorList>
    </citation>
    <scope>NUCLEOTIDE SEQUENCE [GENOMIC DNA]</scope>
</reference>
<reference key="2">
    <citation type="journal article" date="2006" name="J. Bacteriol.">
        <title>The Methanosarcina barkeri genome: comparative analysis with Methanosarcina acetivorans and Methanosarcina mazei reveals extensive rearrangement within methanosarcinal genomes.</title>
        <authorList>
            <person name="Maeder D.L."/>
            <person name="Anderson I."/>
            <person name="Brettin T.S."/>
            <person name="Bruce D.C."/>
            <person name="Gilna P."/>
            <person name="Han C.S."/>
            <person name="Lapidus A."/>
            <person name="Metcalf W.W."/>
            <person name="Saunders E."/>
            <person name="Tapia R."/>
            <person name="Sowers K.R."/>
        </authorList>
    </citation>
    <scope>NUCLEOTIDE SEQUENCE [LARGE SCALE GENOMIC DNA]</scope>
    <source>
        <strain>Fusaro / DSM 804</strain>
    </source>
</reference>
<reference evidence="5" key="3">
    <citation type="journal article" date="2000" name="J. Mol. Biol.">
        <title>Comparison of three methyl-coenzyme M reductases from phylogenetically distant organisms: unusual amino acid modification, conservation and adaptation.</title>
        <authorList>
            <person name="Grabarse W."/>
            <person name="Mahlert F."/>
            <person name="Shima S."/>
            <person name="Thauer R.K."/>
            <person name="Ermler U."/>
        </authorList>
    </citation>
    <scope>PROTEIN SEQUENCE OF N-TERMINUS</scope>
    <scope>X-RAY CRYSTALLOGRAPHY (1.6 ANGSTROMS) IN COMPLEX WITH COENZYME F430; COENZYME B; COENZYME M AND MCR SUBUNITS ALPHA AND BETA</scope>
    <scope>FUNCTION</scope>
    <scope>COFACTOR</scope>
    <scope>SUBUNIT</scope>
    <source>
        <strain>Fusaro / DSM 804</strain>
    </source>
</reference>
<gene>
    <name type="primary">mcrG</name>
    <name type="ordered locus">Mbar_A0894</name>
</gene>